<reference key="1">
    <citation type="submission" date="2009-07" db="EMBL/GenBank/DDBJ databases">
        <title>Complete sequence of Pectobacterium carotovorum subsp. carotovorum PC1.</title>
        <authorList>
            <consortium name="US DOE Joint Genome Institute"/>
            <person name="Lucas S."/>
            <person name="Copeland A."/>
            <person name="Lapidus A."/>
            <person name="Glavina del Rio T."/>
            <person name="Tice H."/>
            <person name="Bruce D."/>
            <person name="Goodwin L."/>
            <person name="Pitluck S."/>
            <person name="Munk A.C."/>
            <person name="Brettin T."/>
            <person name="Detter J.C."/>
            <person name="Han C."/>
            <person name="Tapia R."/>
            <person name="Larimer F."/>
            <person name="Land M."/>
            <person name="Hauser L."/>
            <person name="Kyrpides N."/>
            <person name="Mikhailova N."/>
            <person name="Balakrishnan V."/>
            <person name="Glasner J."/>
            <person name="Perna N.T."/>
        </authorList>
    </citation>
    <scope>NUCLEOTIDE SEQUENCE [LARGE SCALE GENOMIC DNA]</scope>
    <source>
        <strain>PC1</strain>
    </source>
</reference>
<name>KTHY_PECCP</name>
<dbReference type="EC" id="2.7.4.9" evidence="1"/>
<dbReference type="EMBL" id="CP001657">
    <property type="protein sequence ID" value="ACT13529.1"/>
    <property type="molecule type" value="Genomic_DNA"/>
</dbReference>
<dbReference type="RefSeq" id="WP_015840708.1">
    <property type="nucleotide sequence ID" value="NC_012917.1"/>
</dbReference>
<dbReference type="SMR" id="C6DKS8"/>
<dbReference type="STRING" id="561230.PC1_2498"/>
<dbReference type="KEGG" id="pct:PC1_2498"/>
<dbReference type="eggNOG" id="COG0125">
    <property type="taxonomic scope" value="Bacteria"/>
</dbReference>
<dbReference type="HOGENOM" id="CLU_049131_0_1_6"/>
<dbReference type="OrthoDB" id="9774907at2"/>
<dbReference type="Proteomes" id="UP000002736">
    <property type="component" value="Chromosome"/>
</dbReference>
<dbReference type="GO" id="GO:0005829">
    <property type="term" value="C:cytosol"/>
    <property type="evidence" value="ECO:0007669"/>
    <property type="project" value="TreeGrafter"/>
</dbReference>
<dbReference type="GO" id="GO:0005524">
    <property type="term" value="F:ATP binding"/>
    <property type="evidence" value="ECO:0007669"/>
    <property type="project" value="UniProtKB-UniRule"/>
</dbReference>
<dbReference type="GO" id="GO:0004798">
    <property type="term" value="F:dTMP kinase activity"/>
    <property type="evidence" value="ECO:0007669"/>
    <property type="project" value="UniProtKB-UniRule"/>
</dbReference>
<dbReference type="GO" id="GO:0006233">
    <property type="term" value="P:dTDP biosynthetic process"/>
    <property type="evidence" value="ECO:0007669"/>
    <property type="project" value="InterPro"/>
</dbReference>
<dbReference type="GO" id="GO:0006235">
    <property type="term" value="P:dTTP biosynthetic process"/>
    <property type="evidence" value="ECO:0007669"/>
    <property type="project" value="UniProtKB-UniRule"/>
</dbReference>
<dbReference type="GO" id="GO:0006227">
    <property type="term" value="P:dUDP biosynthetic process"/>
    <property type="evidence" value="ECO:0007669"/>
    <property type="project" value="TreeGrafter"/>
</dbReference>
<dbReference type="CDD" id="cd01672">
    <property type="entry name" value="TMPK"/>
    <property type="match status" value="1"/>
</dbReference>
<dbReference type="FunFam" id="3.40.50.300:FF:000321">
    <property type="entry name" value="Thymidylate kinase"/>
    <property type="match status" value="1"/>
</dbReference>
<dbReference type="Gene3D" id="3.40.50.300">
    <property type="entry name" value="P-loop containing nucleotide triphosphate hydrolases"/>
    <property type="match status" value="1"/>
</dbReference>
<dbReference type="HAMAP" id="MF_00165">
    <property type="entry name" value="Thymidylate_kinase"/>
    <property type="match status" value="1"/>
</dbReference>
<dbReference type="InterPro" id="IPR027417">
    <property type="entry name" value="P-loop_NTPase"/>
</dbReference>
<dbReference type="InterPro" id="IPR039430">
    <property type="entry name" value="Thymidylate_kin-like_dom"/>
</dbReference>
<dbReference type="InterPro" id="IPR018095">
    <property type="entry name" value="Thymidylate_kin_CS"/>
</dbReference>
<dbReference type="InterPro" id="IPR018094">
    <property type="entry name" value="Thymidylate_kinase"/>
</dbReference>
<dbReference type="NCBIfam" id="TIGR00041">
    <property type="entry name" value="DTMP_kinase"/>
    <property type="match status" value="1"/>
</dbReference>
<dbReference type="PANTHER" id="PTHR10344">
    <property type="entry name" value="THYMIDYLATE KINASE"/>
    <property type="match status" value="1"/>
</dbReference>
<dbReference type="PANTHER" id="PTHR10344:SF4">
    <property type="entry name" value="UMP-CMP KINASE 2, MITOCHONDRIAL"/>
    <property type="match status" value="1"/>
</dbReference>
<dbReference type="Pfam" id="PF02223">
    <property type="entry name" value="Thymidylate_kin"/>
    <property type="match status" value="1"/>
</dbReference>
<dbReference type="SUPFAM" id="SSF52540">
    <property type="entry name" value="P-loop containing nucleoside triphosphate hydrolases"/>
    <property type="match status" value="1"/>
</dbReference>
<dbReference type="PROSITE" id="PS01331">
    <property type="entry name" value="THYMIDYLATE_KINASE"/>
    <property type="match status" value="1"/>
</dbReference>
<keyword id="KW-0067">ATP-binding</keyword>
<keyword id="KW-0418">Kinase</keyword>
<keyword id="KW-0545">Nucleotide biosynthesis</keyword>
<keyword id="KW-0547">Nucleotide-binding</keyword>
<keyword id="KW-0808">Transferase</keyword>
<organism>
    <name type="scientific">Pectobacterium carotovorum subsp. carotovorum (strain PC1)</name>
    <dbReference type="NCBI Taxonomy" id="561230"/>
    <lineage>
        <taxon>Bacteria</taxon>
        <taxon>Pseudomonadati</taxon>
        <taxon>Pseudomonadota</taxon>
        <taxon>Gammaproteobacteria</taxon>
        <taxon>Enterobacterales</taxon>
        <taxon>Pectobacteriaceae</taxon>
        <taxon>Pectobacterium</taxon>
    </lineage>
</organism>
<feature type="chain" id="PRO_1000203623" description="Thymidylate kinase">
    <location>
        <begin position="1"/>
        <end position="219"/>
    </location>
</feature>
<feature type="binding site" evidence="1">
    <location>
        <begin position="10"/>
        <end position="17"/>
    </location>
    <ligand>
        <name>ATP</name>
        <dbReference type="ChEBI" id="CHEBI:30616"/>
    </ligand>
</feature>
<evidence type="ECO:0000255" key="1">
    <source>
        <dbReference type="HAMAP-Rule" id="MF_00165"/>
    </source>
</evidence>
<accession>C6DKS8</accession>
<sequence>MNSKFIVIEGLEGAGKTTARHIVVETLRSHGVKEVVFTREPGGTPLAEKLRELIKQGMTDEKVTDKAEVLMLYAARVQLVDNVIKPALANGQWVIGDRHDLSSQAYQGGGRGIDQQLLRSLRDTVLGDFRPDLTLYLDLPPAIGLQRARARGELDRIEQESLAFFERTRSRYQELAAEDDSILTIDASQSIEAVSADIQAALQQWLQQQGLLAVVQEPR</sequence>
<gene>
    <name evidence="1" type="primary">tmk</name>
    <name type="ordered locus">PC1_2498</name>
</gene>
<protein>
    <recommendedName>
        <fullName evidence="1">Thymidylate kinase</fullName>
        <ecNumber evidence="1">2.7.4.9</ecNumber>
    </recommendedName>
    <alternativeName>
        <fullName evidence="1">dTMP kinase</fullName>
    </alternativeName>
</protein>
<proteinExistence type="inferred from homology"/>
<comment type="function">
    <text evidence="1">Phosphorylation of dTMP to form dTDP in both de novo and salvage pathways of dTTP synthesis.</text>
</comment>
<comment type="catalytic activity">
    <reaction evidence="1">
        <text>dTMP + ATP = dTDP + ADP</text>
        <dbReference type="Rhea" id="RHEA:13517"/>
        <dbReference type="ChEBI" id="CHEBI:30616"/>
        <dbReference type="ChEBI" id="CHEBI:58369"/>
        <dbReference type="ChEBI" id="CHEBI:63528"/>
        <dbReference type="ChEBI" id="CHEBI:456216"/>
        <dbReference type="EC" id="2.7.4.9"/>
    </reaction>
</comment>
<comment type="similarity">
    <text evidence="1">Belongs to the thymidylate kinase family.</text>
</comment>